<protein>
    <recommendedName>
        <fullName evidence="1">Small ribosomal subunit protein uS11</fullName>
    </recommendedName>
    <alternativeName>
        <fullName evidence="2">30S ribosomal protein S11</fullName>
    </alternativeName>
</protein>
<accession>Q1CCW6</accession>
<accession>D1Q2J8</accession>
<name>RS11_YERPN</name>
<gene>
    <name evidence="1" type="primary">rpsK</name>
    <name type="ordered locus">YPN_3837</name>
    <name type="ORF">YP516_4359</name>
</gene>
<keyword id="KW-0687">Ribonucleoprotein</keyword>
<keyword id="KW-0689">Ribosomal protein</keyword>
<keyword id="KW-0694">RNA-binding</keyword>
<keyword id="KW-0699">rRNA-binding</keyword>
<organism>
    <name type="scientific">Yersinia pestis bv. Antiqua (strain Nepal516)</name>
    <dbReference type="NCBI Taxonomy" id="377628"/>
    <lineage>
        <taxon>Bacteria</taxon>
        <taxon>Pseudomonadati</taxon>
        <taxon>Pseudomonadota</taxon>
        <taxon>Gammaproteobacteria</taxon>
        <taxon>Enterobacterales</taxon>
        <taxon>Yersiniaceae</taxon>
        <taxon>Yersinia</taxon>
    </lineage>
</organism>
<feature type="chain" id="PRO_0000294890" description="Small ribosomal subunit protein uS11">
    <location>
        <begin position="1"/>
        <end position="129"/>
    </location>
</feature>
<dbReference type="EMBL" id="CP000305">
    <property type="protein sequence ID" value="ABG20164.1"/>
    <property type="molecule type" value="Genomic_DNA"/>
</dbReference>
<dbReference type="EMBL" id="ACNQ01000019">
    <property type="protein sequence ID" value="EEO74751.1"/>
    <property type="molecule type" value="Genomic_DNA"/>
</dbReference>
<dbReference type="RefSeq" id="WP_002218948.1">
    <property type="nucleotide sequence ID" value="NZ_ACNQ01000019.1"/>
</dbReference>
<dbReference type="SMR" id="Q1CCW6"/>
<dbReference type="GeneID" id="96663173"/>
<dbReference type="KEGG" id="ypn:YPN_3837"/>
<dbReference type="HOGENOM" id="CLU_072439_5_0_6"/>
<dbReference type="Proteomes" id="UP000008936">
    <property type="component" value="Chromosome"/>
</dbReference>
<dbReference type="GO" id="GO:1990904">
    <property type="term" value="C:ribonucleoprotein complex"/>
    <property type="evidence" value="ECO:0007669"/>
    <property type="project" value="UniProtKB-KW"/>
</dbReference>
<dbReference type="GO" id="GO:0005840">
    <property type="term" value="C:ribosome"/>
    <property type="evidence" value="ECO:0007669"/>
    <property type="project" value="UniProtKB-KW"/>
</dbReference>
<dbReference type="GO" id="GO:0019843">
    <property type="term" value="F:rRNA binding"/>
    <property type="evidence" value="ECO:0007669"/>
    <property type="project" value="UniProtKB-UniRule"/>
</dbReference>
<dbReference type="GO" id="GO:0003735">
    <property type="term" value="F:structural constituent of ribosome"/>
    <property type="evidence" value="ECO:0007669"/>
    <property type="project" value="InterPro"/>
</dbReference>
<dbReference type="GO" id="GO:0006412">
    <property type="term" value="P:translation"/>
    <property type="evidence" value="ECO:0007669"/>
    <property type="project" value="UniProtKB-UniRule"/>
</dbReference>
<dbReference type="FunFam" id="3.30.420.80:FF:000001">
    <property type="entry name" value="30S ribosomal protein S11"/>
    <property type="match status" value="1"/>
</dbReference>
<dbReference type="Gene3D" id="3.30.420.80">
    <property type="entry name" value="Ribosomal protein S11"/>
    <property type="match status" value="1"/>
</dbReference>
<dbReference type="HAMAP" id="MF_01310">
    <property type="entry name" value="Ribosomal_uS11"/>
    <property type="match status" value="1"/>
</dbReference>
<dbReference type="InterPro" id="IPR001971">
    <property type="entry name" value="Ribosomal_uS11"/>
</dbReference>
<dbReference type="InterPro" id="IPR019981">
    <property type="entry name" value="Ribosomal_uS11_bac-type"/>
</dbReference>
<dbReference type="InterPro" id="IPR018102">
    <property type="entry name" value="Ribosomal_uS11_CS"/>
</dbReference>
<dbReference type="InterPro" id="IPR036967">
    <property type="entry name" value="Ribosomal_uS11_sf"/>
</dbReference>
<dbReference type="NCBIfam" id="NF003698">
    <property type="entry name" value="PRK05309.1"/>
    <property type="match status" value="1"/>
</dbReference>
<dbReference type="NCBIfam" id="TIGR03632">
    <property type="entry name" value="uS11_bact"/>
    <property type="match status" value="1"/>
</dbReference>
<dbReference type="PANTHER" id="PTHR11759">
    <property type="entry name" value="40S RIBOSOMAL PROTEIN S14/30S RIBOSOMAL PROTEIN S11"/>
    <property type="match status" value="1"/>
</dbReference>
<dbReference type="Pfam" id="PF00411">
    <property type="entry name" value="Ribosomal_S11"/>
    <property type="match status" value="1"/>
</dbReference>
<dbReference type="PIRSF" id="PIRSF002131">
    <property type="entry name" value="Ribosomal_S11"/>
    <property type="match status" value="1"/>
</dbReference>
<dbReference type="SUPFAM" id="SSF53137">
    <property type="entry name" value="Translational machinery components"/>
    <property type="match status" value="1"/>
</dbReference>
<dbReference type="PROSITE" id="PS00054">
    <property type="entry name" value="RIBOSOMAL_S11"/>
    <property type="match status" value="1"/>
</dbReference>
<sequence>MAKAPIRARKRVRKTVSDGVAHIHASFNNTIVTITDRQGNALGWATAGGSGFRGSRKSTPFAAQVAAERCAEAVKEYGIKNLEVMVKGPGPGRESTIRALNAAGFRITNITDVTPIPHNGCRPPKKRRV</sequence>
<evidence type="ECO:0000255" key="1">
    <source>
        <dbReference type="HAMAP-Rule" id="MF_01310"/>
    </source>
</evidence>
<evidence type="ECO:0000305" key="2"/>
<comment type="function">
    <text evidence="1">Located on the platform of the 30S subunit, it bridges several disparate RNA helices of the 16S rRNA. Forms part of the Shine-Dalgarno cleft in the 70S ribosome.</text>
</comment>
<comment type="subunit">
    <text evidence="1">Part of the 30S ribosomal subunit. Interacts with proteins S7 and S18. Binds to IF-3.</text>
</comment>
<comment type="similarity">
    <text evidence="1">Belongs to the universal ribosomal protein uS11 family.</text>
</comment>
<proteinExistence type="inferred from homology"/>
<reference key="1">
    <citation type="journal article" date="2006" name="J. Bacteriol.">
        <title>Complete genome sequence of Yersinia pestis strains Antiqua and Nepal516: evidence of gene reduction in an emerging pathogen.</title>
        <authorList>
            <person name="Chain P.S.G."/>
            <person name="Hu P."/>
            <person name="Malfatti S.A."/>
            <person name="Radnedge L."/>
            <person name="Larimer F."/>
            <person name="Vergez L.M."/>
            <person name="Worsham P."/>
            <person name="Chu M.C."/>
            <person name="Andersen G.L."/>
        </authorList>
    </citation>
    <scope>NUCLEOTIDE SEQUENCE [LARGE SCALE GENOMIC DNA]</scope>
    <source>
        <strain>Nepal516</strain>
    </source>
</reference>
<reference key="2">
    <citation type="submission" date="2009-04" db="EMBL/GenBank/DDBJ databases">
        <title>Yersinia pestis Nepal516A whole genome shotgun sequencing project.</title>
        <authorList>
            <person name="Plunkett G. III"/>
            <person name="Anderson B.D."/>
            <person name="Baumler D.J."/>
            <person name="Burland V."/>
            <person name="Cabot E.L."/>
            <person name="Glasner J.D."/>
            <person name="Mau B."/>
            <person name="Neeno-Eckwall E."/>
            <person name="Perna N.T."/>
            <person name="Munk A.C."/>
            <person name="Tapia R."/>
            <person name="Green L.D."/>
            <person name="Rogers Y.C."/>
            <person name="Detter J.C."/>
            <person name="Bruce D.C."/>
            <person name="Brettin T.S."/>
        </authorList>
    </citation>
    <scope>NUCLEOTIDE SEQUENCE [LARGE SCALE GENOMIC DNA]</scope>
    <source>
        <strain>Nepal516</strain>
    </source>
</reference>